<reference key="1">
    <citation type="journal article" date="2004" name="Science">
        <title>The 1.2-megabase genome sequence of Mimivirus.</title>
        <authorList>
            <person name="Raoult D."/>
            <person name="Audic S."/>
            <person name="Robert C."/>
            <person name="Abergel C."/>
            <person name="Renesto P."/>
            <person name="Ogata H."/>
            <person name="La Scola B."/>
            <person name="Susan M."/>
            <person name="Claverie J.-M."/>
        </authorList>
    </citation>
    <scope>NUCLEOTIDE SEQUENCE [LARGE SCALE GENOMIC DNA]</scope>
    <source>
        <strain>Rowbotham-Bradford</strain>
    </source>
</reference>
<keyword id="KW-0479">Metal-binding</keyword>
<keyword id="KW-1185">Reference proteome</keyword>
<keyword id="KW-0862">Zinc</keyword>
<keyword id="KW-0863">Zinc-finger</keyword>
<feature type="chain" id="PRO_0000056365" description="Putative RING finger protein R311">
    <location>
        <begin position="1"/>
        <end position="659"/>
    </location>
</feature>
<feature type="zinc finger region" description="RING-type" evidence="1">
    <location>
        <begin position="502"/>
        <end position="540"/>
    </location>
</feature>
<gene>
    <name type="ordered locus">MIMI_R311</name>
</gene>
<protein>
    <recommendedName>
        <fullName>Putative RING finger protein R311</fullName>
    </recommendedName>
</protein>
<evidence type="ECO:0000255" key="1">
    <source>
        <dbReference type="PROSITE-ProRule" id="PRU00175"/>
    </source>
</evidence>
<organismHost>
    <name type="scientific">Acanthamoeba polyphaga</name>
    <name type="common">Amoeba</name>
    <dbReference type="NCBI Taxonomy" id="5757"/>
</organismHost>
<sequence length="659" mass="77613">MKLKLIFKTIYADKDKTDLFYCVSKGIIYNKIKNKIVYQLKYTEIPRYFNFNLEFESYQSNKIYQSNTNTYKNTIIGSIYNLVLYIDIHNLFCDRFRINNKVLKILCYYLIIIQIRQLKTNKSYNITKENLPFKINDIINNPIQLIPWNLFLLGKNITLDLKNIKLVTNKQIPKKKFQKTGCIFESNNIDKLTHELRKKITTKSLIIIPTGFPKLWTNCSSITYTTYIDLVQLNDNFENKFKNKKMIHNIIVHECYIQYIPIIKKLIQYFVDCKSIWIINSLPLKYYISNDNNTEGKFTIGNVFKLANIWANFSTNDKKSYKTEIIRFIMADFNKLYFKINFPTDDLPVQIISPNILELNIFNEFRKFHMDWLSKLNNDKNNIYSSTSKHKNNRIKSKIYDCVMVLSLSVINNNDITIFFKNKIQKTLDINCKISKKIEKMIDVYISARKTSHHKINEKTPVDFTKIVNSLTQKKDKINSVISNYNRYQKNGFYDSIKDNDCPVCYDDDYIKTKLICGHTVCLTCVLNILPNSKGCPLCMEPININKMAIIRESIGESNNYSEMLDLLFKNLSNETLILTNLEETHNIMLYRGFNVWLLKCSFIAKKINFLSKITTVIILSSPLNSINDSDKLDFEMFQEYIKLVNPNISIKRIQLNIY</sequence>
<name>YR311_MIMIV</name>
<dbReference type="EMBL" id="AY653733">
    <property type="protein sequence ID" value="AAV50583.1"/>
    <property type="molecule type" value="Genomic_DNA"/>
</dbReference>
<dbReference type="KEGG" id="vg:9924928"/>
<dbReference type="OrthoDB" id="14958at10239"/>
<dbReference type="Proteomes" id="UP000001134">
    <property type="component" value="Genome"/>
</dbReference>
<dbReference type="GO" id="GO:0008270">
    <property type="term" value="F:zinc ion binding"/>
    <property type="evidence" value="ECO:0007669"/>
    <property type="project" value="UniProtKB-KW"/>
</dbReference>
<dbReference type="CDD" id="cd16564">
    <property type="entry name" value="RING-HC_RNF222"/>
    <property type="match status" value="1"/>
</dbReference>
<dbReference type="Gene3D" id="3.30.40.10">
    <property type="entry name" value="Zinc/RING finger domain, C3HC4 (zinc finger)"/>
    <property type="match status" value="1"/>
</dbReference>
<dbReference type="InterPro" id="IPR001841">
    <property type="entry name" value="Znf_RING"/>
</dbReference>
<dbReference type="InterPro" id="IPR013083">
    <property type="entry name" value="Znf_RING/FYVE/PHD"/>
</dbReference>
<dbReference type="InterPro" id="IPR017907">
    <property type="entry name" value="Znf_RING_CS"/>
</dbReference>
<dbReference type="Pfam" id="PF13920">
    <property type="entry name" value="zf-C3HC4_3"/>
    <property type="match status" value="1"/>
</dbReference>
<dbReference type="SMART" id="SM00184">
    <property type="entry name" value="RING"/>
    <property type="match status" value="1"/>
</dbReference>
<dbReference type="SUPFAM" id="SSF57850">
    <property type="entry name" value="RING/U-box"/>
    <property type="match status" value="1"/>
</dbReference>
<dbReference type="PROSITE" id="PS00518">
    <property type="entry name" value="ZF_RING_1"/>
    <property type="match status" value="1"/>
</dbReference>
<dbReference type="PROSITE" id="PS50089">
    <property type="entry name" value="ZF_RING_2"/>
    <property type="match status" value="1"/>
</dbReference>
<proteinExistence type="predicted"/>
<organism>
    <name type="scientific">Acanthamoeba polyphaga mimivirus</name>
    <name type="common">APMV</name>
    <dbReference type="NCBI Taxonomy" id="212035"/>
    <lineage>
        <taxon>Viruses</taxon>
        <taxon>Varidnaviria</taxon>
        <taxon>Bamfordvirae</taxon>
        <taxon>Nucleocytoviricota</taxon>
        <taxon>Megaviricetes</taxon>
        <taxon>Imitervirales</taxon>
        <taxon>Mimiviridae</taxon>
        <taxon>Megamimivirinae</taxon>
        <taxon>Mimivirus</taxon>
        <taxon>Mimivirus bradfordmassiliense</taxon>
    </lineage>
</organism>
<accession>Q5UPZ3</accession>